<keyword id="KW-0238">DNA-binding</keyword>
<keyword id="KW-0678">Repressor</keyword>
<keyword id="KW-0804">Transcription</keyword>
<keyword id="KW-0805">Transcription regulation</keyword>
<proteinExistence type="predicted"/>
<name>LACI_RHIRD</name>
<sequence>ETGYQQAKSLLALEVRPDAIVAANDNMAIGTYRAIQEAGLSIPGDIAVVAFNDIPVAQFLTPPLSTMRIPGELIGEVAVDLLVERLNGRDYSKHVTLPTEMIWRASAKKPSAS</sequence>
<comment type="function">
    <text>Repressor of the lactose operon. Binds lactose as an inducer.</text>
</comment>
<dbReference type="EMBL" id="X66596">
    <property type="status" value="NOT_ANNOTATED_CDS"/>
    <property type="molecule type" value="Genomic_DNA"/>
</dbReference>
<dbReference type="PIR" id="S34733">
    <property type="entry name" value="S34733"/>
</dbReference>
<dbReference type="SMR" id="Q01936"/>
<dbReference type="GO" id="GO:0003700">
    <property type="term" value="F:DNA-binding transcription factor activity"/>
    <property type="evidence" value="ECO:0007669"/>
    <property type="project" value="TreeGrafter"/>
</dbReference>
<dbReference type="GO" id="GO:0000976">
    <property type="term" value="F:transcription cis-regulatory region binding"/>
    <property type="evidence" value="ECO:0007669"/>
    <property type="project" value="TreeGrafter"/>
</dbReference>
<dbReference type="Gene3D" id="3.40.50.2300">
    <property type="match status" value="1"/>
</dbReference>
<dbReference type="InterPro" id="IPR046335">
    <property type="entry name" value="LacI/GalR-like_sensor"/>
</dbReference>
<dbReference type="InterPro" id="IPR028082">
    <property type="entry name" value="Peripla_BP_I"/>
</dbReference>
<dbReference type="PANTHER" id="PTHR30146:SF109">
    <property type="entry name" value="HTH-TYPE TRANSCRIPTIONAL REGULATOR GALS"/>
    <property type="match status" value="1"/>
</dbReference>
<dbReference type="PANTHER" id="PTHR30146">
    <property type="entry name" value="LACI-RELATED TRANSCRIPTIONAL REPRESSOR"/>
    <property type="match status" value="1"/>
</dbReference>
<dbReference type="Pfam" id="PF13377">
    <property type="entry name" value="Peripla_BP_3"/>
    <property type="match status" value="1"/>
</dbReference>
<dbReference type="SUPFAM" id="SSF53822">
    <property type="entry name" value="Periplasmic binding protein-like I"/>
    <property type="match status" value="1"/>
</dbReference>
<accession>Q01936</accession>
<organism>
    <name type="scientific">Rhizobium radiobacter</name>
    <name type="common">Agrobacterium tumefaciens</name>
    <name type="synonym">Agrobacterium radiobacter</name>
    <dbReference type="NCBI Taxonomy" id="358"/>
    <lineage>
        <taxon>Bacteria</taxon>
        <taxon>Pseudomonadati</taxon>
        <taxon>Pseudomonadota</taxon>
        <taxon>Alphaproteobacteria</taxon>
        <taxon>Hyphomicrobiales</taxon>
        <taxon>Rhizobiaceae</taxon>
        <taxon>Rhizobium/Agrobacterium group</taxon>
        <taxon>Agrobacterium</taxon>
        <taxon>Agrobacterium tumefaciens complex</taxon>
    </lineage>
</organism>
<gene>
    <name type="primary">lacI</name>
</gene>
<protein>
    <recommendedName>
        <fullName>Lactose operon repressor</fullName>
    </recommendedName>
</protein>
<feature type="chain" id="PRO_0000107962" description="Lactose operon repressor">
    <location>
        <begin position="1" status="less than"/>
        <end position="113"/>
    </location>
</feature>
<feature type="non-terminal residue">
    <location>
        <position position="1"/>
    </location>
</feature>
<reference key="1">
    <citation type="journal article" date="1992" name="Mol. Microbiol.">
        <title>Molecular analysis of the lac operon encoding the binding-protein-dependent lactose transport system and beta-galactosidase in Agrobacterium radiobacter.</title>
        <authorList>
            <person name="Williams S.G."/>
            <person name="Greenwood J.A."/>
            <person name="Jones C.W."/>
        </authorList>
    </citation>
    <scope>NUCLEOTIDE SEQUENCE [GENOMIC DNA]</scope>
    <source>
        <strain>AR50</strain>
    </source>
</reference>